<reference key="1">
    <citation type="submission" date="2006-08" db="EMBL/GenBank/DDBJ databases">
        <title>Complete sequence of chromosome 1 of Shewanella sp. MR-7.</title>
        <authorList>
            <person name="Copeland A."/>
            <person name="Lucas S."/>
            <person name="Lapidus A."/>
            <person name="Barry K."/>
            <person name="Detter J.C."/>
            <person name="Glavina del Rio T."/>
            <person name="Hammon N."/>
            <person name="Israni S."/>
            <person name="Dalin E."/>
            <person name="Tice H."/>
            <person name="Pitluck S."/>
            <person name="Kiss H."/>
            <person name="Brettin T."/>
            <person name="Bruce D."/>
            <person name="Han C."/>
            <person name="Tapia R."/>
            <person name="Gilna P."/>
            <person name="Schmutz J."/>
            <person name="Larimer F."/>
            <person name="Land M."/>
            <person name="Hauser L."/>
            <person name="Kyrpides N."/>
            <person name="Mikhailova N."/>
            <person name="Nealson K."/>
            <person name="Konstantinidis K."/>
            <person name="Klappenbach J."/>
            <person name="Tiedje J."/>
            <person name="Richardson P."/>
        </authorList>
    </citation>
    <scope>NUCLEOTIDE SEQUENCE [LARGE SCALE GENOMIC DNA]</scope>
    <source>
        <strain>MR-7</strain>
    </source>
</reference>
<name>DARP_SHESR</name>
<organism>
    <name type="scientific">Shewanella sp. (strain MR-7)</name>
    <dbReference type="NCBI Taxonomy" id="60481"/>
    <lineage>
        <taxon>Bacteria</taxon>
        <taxon>Pseudomonadati</taxon>
        <taxon>Pseudomonadota</taxon>
        <taxon>Gammaproteobacteria</taxon>
        <taxon>Alteromonadales</taxon>
        <taxon>Shewanellaceae</taxon>
        <taxon>Shewanella</taxon>
    </lineage>
</organism>
<proteinExistence type="inferred from homology"/>
<accession>Q0HZF8</accession>
<feature type="chain" id="PRO_1000046805" description="Dual-action ribosomal maturation protein DarP">
    <location>
        <begin position="1"/>
        <end position="177"/>
    </location>
</feature>
<feature type="region of interest" description="Disordered" evidence="2">
    <location>
        <begin position="1"/>
        <end position="26"/>
    </location>
</feature>
<comment type="function">
    <text evidence="1">Member of a network of 50S ribosomal subunit biogenesis factors which assembles along the 30S-50S interface, preventing incorrect 23S rRNA structures from forming. Promotes peptidyl transferase center (PTC) maturation.</text>
</comment>
<comment type="subcellular location">
    <subcellularLocation>
        <location evidence="1">Cytoplasm</location>
    </subcellularLocation>
    <text evidence="1">Associates with late stage pre-50S ribosomal subunits.</text>
</comment>
<comment type="similarity">
    <text evidence="1">Belongs to the DarP family.</text>
</comment>
<evidence type="ECO:0000255" key="1">
    <source>
        <dbReference type="HAMAP-Rule" id="MF_00765"/>
    </source>
</evidence>
<evidence type="ECO:0000256" key="2">
    <source>
        <dbReference type="SAM" id="MobiDB-lite"/>
    </source>
</evidence>
<protein>
    <recommendedName>
        <fullName evidence="1">Dual-action ribosomal maturation protein DarP</fullName>
    </recommendedName>
    <alternativeName>
        <fullName evidence="1">Large ribosomal subunit assembly factor DarP</fullName>
    </alternativeName>
</protein>
<keyword id="KW-0963">Cytoplasm</keyword>
<keyword id="KW-0690">Ribosome biogenesis</keyword>
<keyword id="KW-0694">RNA-binding</keyword>
<keyword id="KW-0699">rRNA-binding</keyword>
<sequence>MKIVGDSEHFKQPYDSDEEYVSKTEDKRDCEAAQKVGMELVSLSKTQLDKIELDEHLYDSIQQAHKIKPKTEAYRRHMQYIGKLMRNVDVEPIKAALAIVLNKNNNETAKLQMFEKMRERLLSQGDSEIQTLVEHYPQLDRQKLRTLVRQATKELAKGPESKSSKELFKYLRSEIQD</sequence>
<dbReference type="EMBL" id="CP000444">
    <property type="protein sequence ID" value="ABI41497.1"/>
    <property type="molecule type" value="Genomic_DNA"/>
</dbReference>
<dbReference type="SMR" id="Q0HZF8"/>
<dbReference type="KEGG" id="shm:Shewmr7_0494"/>
<dbReference type="HOGENOM" id="CLU_106757_2_0_6"/>
<dbReference type="GO" id="GO:0005829">
    <property type="term" value="C:cytosol"/>
    <property type="evidence" value="ECO:0007669"/>
    <property type="project" value="TreeGrafter"/>
</dbReference>
<dbReference type="GO" id="GO:0043022">
    <property type="term" value="F:ribosome binding"/>
    <property type="evidence" value="ECO:0007669"/>
    <property type="project" value="UniProtKB-UniRule"/>
</dbReference>
<dbReference type="GO" id="GO:0019843">
    <property type="term" value="F:rRNA binding"/>
    <property type="evidence" value="ECO:0007669"/>
    <property type="project" value="UniProtKB-UniRule"/>
</dbReference>
<dbReference type="GO" id="GO:1902626">
    <property type="term" value="P:assembly of large subunit precursor of preribosome"/>
    <property type="evidence" value="ECO:0007669"/>
    <property type="project" value="UniProtKB-UniRule"/>
</dbReference>
<dbReference type="CDD" id="cd16331">
    <property type="entry name" value="YjgA-like"/>
    <property type="match status" value="1"/>
</dbReference>
<dbReference type="Gene3D" id="1.10.60.30">
    <property type="entry name" value="PSPTO4464-like domains"/>
    <property type="match status" value="2"/>
</dbReference>
<dbReference type="HAMAP" id="MF_00765">
    <property type="entry name" value="DarP"/>
    <property type="match status" value="1"/>
</dbReference>
<dbReference type="InterPro" id="IPR006839">
    <property type="entry name" value="DarP"/>
</dbReference>
<dbReference type="InterPro" id="IPR023153">
    <property type="entry name" value="DarP_sf"/>
</dbReference>
<dbReference type="NCBIfam" id="NF003593">
    <property type="entry name" value="PRK05255.1-1"/>
    <property type="match status" value="1"/>
</dbReference>
<dbReference type="PANTHER" id="PTHR38101">
    <property type="entry name" value="UPF0307 PROTEIN YJGA"/>
    <property type="match status" value="1"/>
</dbReference>
<dbReference type="PANTHER" id="PTHR38101:SF1">
    <property type="entry name" value="UPF0307 PROTEIN YJGA"/>
    <property type="match status" value="1"/>
</dbReference>
<dbReference type="Pfam" id="PF04751">
    <property type="entry name" value="DarP"/>
    <property type="match status" value="1"/>
</dbReference>
<dbReference type="PIRSF" id="PIRSF016183">
    <property type="entry name" value="UCP016183"/>
    <property type="match status" value="1"/>
</dbReference>
<dbReference type="SUPFAM" id="SSF158710">
    <property type="entry name" value="PSPTO4464-like"/>
    <property type="match status" value="1"/>
</dbReference>
<gene>
    <name evidence="1" type="primary">darP</name>
    <name type="ordered locus">Shewmr7_0494</name>
</gene>